<accession>P80206</accession>
<gene>
    <name type="primary">Otx2</name>
    <name type="synonym">Otx-2</name>
</gene>
<organism>
    <name type="scientific">Mus musculus</name>
    <name type="common">Mouse</name>
    <dbReference type="NCBI Taxonomy" id="10090"/>
    <lineage>
        <taxon>Eukaryota</taxon>
        <taxon>Metazoa</taxon>
        <taxon>Chordata</taxon>
        <taxon>Craniata</taxon>
        <taxon>Vertebrata</taxon>
        <taxon>Euteleostomi</taxon>
        <taxon>Mammalia</taxon>
        <taxon>Eutheria</taxon>
        <taxon>Euarchontoglires</taxon>
        <taxon>Glires</taxon>
        <taxon>Rodentia</taxon>
        <taxon>Myomorpha</taxon>
        <taxon>Muroidea</taxon>
        <taxon>Muridae</taxon>
        <taxon>Murinae</taxon>
        <taxon>Mus</taxon>
        <taxon>Mus</taxon>
    </lineage>
</organism>
<feature type="chain" id="PRO_0000049211" description="Homeobox protein OTX2">
    <location>
        <begin position="1"/>
        <end position="289"/>
    </location>
</feature>
<feature type="DNA-binding region" description="Homeobox" evidence="2">
    <location>
        <begin position="38"/>
        <end position="97"/>
    </location>
</feature>
<feature type="region of interest" description="Disordered" evidence="3">
    <location>
        <begin position="93"/>
        <end position="143"/>
    </location>
</feature>
<feature type="compositionally biased region" description="Low complexity" evidence="3">
    <location>
        <begin position="95"/>
        <end position="106"/>
    </location>
</feature>
<feature type="compositionally biased region" description="Polar residues" evidence="3">
    <location>
        <begin position="123"/>
        <end position="132"/>
    </location>
</feature>
<feature type="compositionally biased region" description="Low complexity" evidence="3">
    <location>
        <begin position="133"/>
        <end position="143"/>
    </location>
</feature>
<feature type="mutagenesis site" description="Has a dominant negative effect on the proximal promoter region of HESX1 gene; represses reporter expression." evidence="4">
    <original>N</original>
    <variation>S</variation>
    <location>
        <position position="225"/>
    </location>
</feature>
<feature type="helix" evidence="6">
    <location>
        <begin position="47"/>
        <end position="59"/>
    </location>
</feature>
<feature type="helix" evidence="6">
    <location>
        <begin position="65"/>
        <end position="74"/>
    </location>
</feature>
<feature type="helix" evidence="6">
    <location>
        <begin position="79"/>
        <end position="90"/>
    </location>
</feature>
<feature type="helix" evidence="6">
    <location>
        <begin position="92"/>
        <end position="95"/>
    </location>
</feature>
<evidence type="ECO:0000250" key="1">
    <source>
        <dbReference type="UniProtKB" id="P32243"/>
    </source>
</evidence>
<evidence type="ECO:0000255" key="2">
    <source>
        <dbReference type="PROSITE-ProRule" id="PRU00108"/>
    </source>
</evidence>
<evidence type="ECO:0000256" key="3">
    <source>
        <dbReference type="SAM" id="MobiDB-lite"/>
    </source>
</evidence>
<evidence type="ECO:0000269" key="4">
    <source>
    </source>
</evidence>
<evidence type="ECO:0000305" key="5"/>
<evidence type="ECO:0007829" key="6">
    <source>
        <dbReference type="PDB" id="2DMS"/>
    </source>
</evidence>
<name>OTX2_MOUSE</name>
<dbReference type="EMBL" id="X68884">
    <property type="protein sequence ID" value="CAA48755.1"/>
    <property type="molecule type" value="mRNA"/>
</dbReference>
<dbReference type="CCDS" id="CCDS49473.1"/>
<dbReference type="PIR" id="S35346">
    <property type="entry name" value="S35346"/>
</dbReference>
<dbReference type="PDB" id="2DMS">
    <property type="method" value="NMR"/>
    <property type="chains" value="A=39-105"/>
</dbReference>
<dbReference type="PDBsum" id="2DMS"/>
<dbReference type="BMRB" id="P80206"/>
<dbReference type="SMR" id="P80206"/>
<dbReference type="CORUM" id="P80206"/>
<dbReference type="FunCoup" id="P80206">
    <property type="interactions" value="274"/>
</dbReference>
<dbReference type="MINT" id="P80206"/>
<dbReference type="STRING" id="10090.ENSMUSP00000112532"/>
<dbReference type="iPTMnet" id="P80206"/>
<dbReference type="PhosphoSitePlus" id="P80206"/>
<dbReference type="PaxDb" id="10090-ENSMUSP00000112532"/>
<dbReference type="ProteomicsDB" id="294137"/>
<dbReference type="AGR" id="MGI:97451"/>
<dbReference type="MGI" id="MGI:97451">
    <property type="gene designation" value="Otx2"/>
</dbReference>
<dbReference type="eggNOG" id="KOG2251">
    <property type="taxonomic scope" value="Eukaryota"/>
</dbReference>
<dbReference type="InParanoid" id="P80206"/>
<dbReference type="OrthoDB" id="6159439at2759"/>
<dbReference type="PhylomeDB" id="P80206"/>
<dbReference type="ChiTaRS" id="Otx2">
    <property type="organism name" value="mouse"/>
</dbReference>
<dbReference type="EvolutionaryTrace" id="P80206"/>
<dbReference type="PRO" id="PR:P80206"/>
<dbReference type="Proteomes" id="UP000000589">
    <property type="component" value="Unplaced"/>
</dbReference>
<dbReference type="RNAct" id="P80206">
    <property type="molecule type" value="protein"/>
</dbReference>
<dbReference type="GO" id="GO:0005737">
    <property type="term" value="C:cytoplasm"/>
    <property type="evidence" value="ECO:0000314"/>
    <property type="project" value="MGI"/>
</dbReference>
<dbReference type="GO" id="GO:0005654">
    <property type="term" value="C:nucleoplasm"/>
    <property type="evidence" value="ECO:0000304"/>
    <property type="project" value="Reactome"/>
</dbReference>
<dbReference type="GO" id="GO:0005634">
    <property type="term" value="C:nucleus"/>
    <property type="evidence" value="ECO:0000314"/>
    <property type="project" value="MGI"/>
</dbReference>
<dbReference type="GO" id="GO:0005667">
    <property type="term" value="C:transcription regulator complex"/>
    <property type="evidence" value="ECO:0000314"/>
    <property type="project" value="MGI"/>
</dbReference>
<dbReference type="GO" id="GO:0000987">
    <property type="term" value="F:cis-regulatory region sequence-specific DNA binding"/>
    <property type="evidence" value="ECO:0000304"/>
    <property type="project" value="MGI"/>
</dbReference>
<dbReference type="GO" id="GO:0003700">
    <property type="term" value="F:DNA-binding transcription factor activity"/>
    <property type="evidence" value="ECO:0000304"/>
    <property type="project" value="MGI"/>
</dbReference>
<dbReference type="GO" id="GO:0000981">
    <property type="term" value="F:DNA-binding transcription factor activity, RNA polymerase II-specific"/>
    <property type="evidence" value="ECO:0007669"/>
    <property type="project" value="InterPro"/>
</dbReference>
<dbReference type="GO" id="GO:0009887">
    <property type="term" value="P:animal organ morphogenesis"/>
    <property type="evidence" value="ECO:0000315"/>
    <property type="project" value="MGI"/>
</dbReference>
<dbReference type="GO" id="GO:0009952">
    <property type="term" value="P:anterior/posterior pattern specification"/>
    <property type="evidence" value="ECO:0000315"/>
    <property type="project" value="MGI"/>
</dbReference>
<dbReference type="GO" id="GO:0030154">
    <property type="term" value="P:cell differentiation"/>
    <property type="evidence" value="ECO:0000304"/>
    <property type="project" value="MGI"/>
</dbReference>
<dbReference type="GO" id="GO:0045165">
    <property type="term" value="P:cell fate commitment"/>
    <property type="evidence" value="ECO:0000315"/>
    <property type="project" value="MGI"/>
</dbReference>
<dbReference type="GO" id="GO:1990830">
    <property type="term" value="P:cellular response to leukemia inhibitory factor"/>
    <property type="evidence" value="ECO:0000270"/>
    <property type="project" value="MGI"/>
</dbReference>
<dbReference type="GO" id="GO:0007417">
    <property type="term" value="P:central nervous system development"/>
    <property type="evidence" value="ECO:0000315"/>
    <property type="project" value="MGI"/>
</dbReference>
<dbReference type="GO" id="GO:0048852">
    <property type="term" value="P:diencephalon morphogenesis"/>
    <property type="evidence" value="ECO:0000316"/>
    <property type="project" value="MGI"/>
</dbReference>
<dbReference type="GO" id="GO:0071542">
    <property type="term" value="P:dopaminergic neuron differentiation"/>
    <property type="evidence" value="ECO:0000315"/>
    <property type="project" value="MGI"/>
</dbReference>
<dbReference type="GO" id="GO:0009953">
    <property type="term" value="P:dorsal/ventral pattern formation"/>
    <property type="evidence" value="ECO:0000315"/>
    <property type="project" value="MGI"/>
</dbReference>
<dbReference type="GO" id="GO:0007492">
    <property type="term" value="P:endoderm development"/>
    <property type="evidence" value="ECO:0000316"/>
    <property type="project" value="MGI"/>
</dbReference>
<dbReference type="GO" id="GO:0042706">
    <property type="term" value="P:eye photoreceptor cell fate commitment"/>
    <property type="evidence" value="ECO:0000315"/>
    <property type="project" value="MGI"/>
</dbReference>
<dbReference type="GO" id="GO:0030900">
    <property type="term" value="P:forebrain development"/>
    <property type="evidence" value="ECO:0000315"/>
    <property type="project" value="MGI"/>
</dbReference>
<dbReference type="GO" id="GO:0002067">
    <property type="term" value="P:glandular epithelial cell differentiation"/>
    <property type="evidence" value="ECO:0000315"/>
    <property type="project" value="MGI"/>
</dbReference>
<dbReference type="GO" id="GO:0042472">
    <property type="term" value="P:inner ear morphogenesis"/>
    <property type="evidence" value="ECO:0000316"/>
    <property type="project" value="MGI"/>
</dbReference>
<dbReference type="GO" id="GO:0048382">
    <property type="term" value="P:mesendoderm development"/>
    <property type="evidence" value="ECO:0000315"/>
    <property type="project" value="MGI"/>
</dbReference>
<dbReference type="GO" id="GO:0022037">
    <property type="term" value="P:metencephalon development"/>
    <property type="evidence" value="ECO:0000316"/>
    <property type="project" value="MGI"/>
</dbReference>
<dbReference type="GO" id="GO:0030901">
    <property type="term" value="P:midbrain development"/>
    <property type="evidence" value="ECO:0000315"/>
    <property type="project" value="MGI"/>
</dbReference>
<dbReference type="GO" id="GO:0060563">
    <property type="term" value="P:neuroepithelial cell differentiation"/>
    <property type="evidence" value="ECO:0000315"/>
    <property type="project" value="MGI"/>
</dbReference>
<dbReference type="GO" id="GO:0048663">
    <property type="term" value="P:neuron fate commitment"/>
    <property type="evidence" value="ECO:0000315"/>
    <property type="project" value="MGI"/>
</dbReference>
<dbReference type="GO" id="GO:0048664">
    <property type="term" value="P:neuron fate determination"/>
    <property type="evidence" value="ECO:0000315"/>
    <property type="project" value="MGI"/>
</dbReference>
<dbReference type="GO" id="GO:0048665">
    <property type="term" value="P:neuron fate specification"/>
    <property type="evidence" value="ECO:0000315"/>
    <property type="project" value="MGI"/>
</dbReference>
<dbReference type="GO" id="GO:0048709">
    <property type="term" value="P:oligodendrocyte differentiation"/>
    <property type="evidence" value="ECO:0000315"/>
    <property type="project" value="MGI"/>
</dbReference>
<dbReference type="GO" id="GO:0045893">
    <property type="term" value="P:positive regulation of DNA-templated transcription"/>
    <property type="evidence" value="ECO:0000315"/>
    <property type="project" value="UniProtKB"/>
</dbReference>
<dbReference type="GO" id="GO:0040019">
    <property type="term" value="P:positive regulation of embryonic development"/>
    <property type="evidence" value="ECO:0000315"/>
    <property type="project" value="UniProtKB"/>
</dbReference>
<dbReference type="GO" id="GO:2000543">
    <property type="term" value="P:positive regulation of gastrulation"/>
    <property type="evidence" value="ECO:0000315"/>
    <property type="project" value="UniProtKB"/>
</dbReference>
<dbReference type="GO" id="GO:0045944">
    <property type="term" value="P:positive regulation of transcription by RNA polymerase II"/>
    <property type="evidence" value="ECO:0000314"/>
    <property type="project" value="MGI"/>
</dbReference>
<dbReference type="GO" id="GO:0090009">
    <property type="term" value="P:primitive streak formation"/>
    <property type="evidence" value="ECO:0000315"/>
    <property type="project" value="UniProtKB"/>
</dbReference>
<dbReference type="GO" id="GO:0006357">
    <property type="term" value="P:regulation of transcription by RNA polymerase II"/>
    <property type="evidence" value="ECO:0000314"/>
    <property type="project" value="MGI"/>
</dbReference>
<dbReference type="GO" id="GO:0032525">
    <property type="term" value="P:somite rostral/caudal axis specification"/>
    <property type="evidence" value="ECO:0000315"/>
    <property type="project" value="MGI"/>
</dbReference>
<dbReference type="GO" id="GO:0021978">
    <property type="term" value="P:telencephalon regionalization"/>
    <property type="evidence" value="ECO:0000315"/>
    <property type="project" value="MGI"/>
</dbReference>
<dbReference type="CDD" id="cd00086">
    <property type="entry name" value="homeodomain"/>
    <property type="match status" value="1"/>
</dbReference>
<dbReference type="FunFam" id="1.10.10.60:FF:000142">
    <property type="entry name" value="homeobox protein OTX2 isoform X2"/>
    <property type="match status" value="1"/>
</dbReference>
<dbReference type="Gene3D" id="1.10.10.60">
    <property type="entry name" value="Homeodomain-like"/>
    <property type="match status" value="1"/>
</dbReference>
<dbReference type="InterPro" id="IPR001356">
    <property type="entry name" value="HD"/>
</dbReference>
<dbReference type="InterPro" id="IPR017970">
    <property type="entry name" value="Homeobox_CS"/>
</dbReference>
<dbReference type="InterPro" id="IPR009057">
    <property type="entry name" value="Homeodomain-like_sf"/>
</dbReference>
<dbReference type="InterPro" id="IPR003022">
    <property type="entry name" value="Otx2_TF"/>
</dbReference>
<dbReference type="InterPro" id="IPR003025">
    <property type="entry name" value="Otx_TF"/>
</dbReference>
<dbReference type="InterPro" id="IPR013851">
    <property type="entry name" value="Otx_TF_C"/>
</dbReference>
<dbReference type="PANTHER" id="PTHR45793">
    <property type="entry name" value="HOMEOBOX PROTEIN"/>
    <property type="match status" value="1"/>
</dbReference>
<dbReference type="PANTHER" id="PTHR45793:SF2">
    <property type="entry name" value="HOMEOBOX PROTEIN OTX2"/>
    <property type="match status" value="1"/>
</dbReference>
<dbReference type="Pfam" id="PF00046">
    <property type="entry name" value="Homeodomain"/>
    <property type="match status" value="1"/>
</dbReference>
<dbReference type="Pfam" id="PF03529">
    <property type="entry name" value="TF_Otx"/>
    <property type="match status" value="1"/>
</dbReference>
<dbReference type="PRINTS" id="PR01257">
    <property type="entry name" value="OTX2HOMEOBOX"/>
</dbReference>
<dbReference type="PRINTS" id="PR01255">
    <property type="entry name" value="OTXHOMEOBOX"/>
</dbReference>
<dbReference type="SMART" id="SM00389">
    <property type="entry name" value="HOX"/>
    <property type="match status" value="1"/>
</dbReference>
<dbReference type="SUPFAM" id="SSF46689">
    <property type="entry name" value="Homeodomain-like"/>
    <property type="match status" value="1"/>
</dbReference>
<dbReference type="PROSITE" id="PS00027">
    <property type="entry name" value="HOMEOBOX_1"/>
    <property type="match status" value="1"/>
</dbReference>
<dbReference type="PROSITE" id="PS50071">
    <property type="entry name" value="HOMEOBOX_2"/>
    <property type="match status" value="1"/>
</dbReference>
<reference key="1">
    <citation type="journal article" date="1993" name="EMBO J.">
        <title>A vertebrate gene related to orthodenticle contains a homeodomain of the bicoid class and demarcates anterior neuroectoderm in the gastrulating mouse embryo.</title>
        <authorList>
            <person name="Simeone A."/>
            <person name="Acampora D."/>
            <person name="Mallamaci A."/>
            <person name="Stornaiuolo A."/>
            <person name="D'Apice M.R."/>
            <person name="Nigro V."/>
            <person name="Boncinelli E."/>
        </authorList>
    </citation>
    <scope>NUCLEOTIDE SEQUENCE [MRNA]</scope>
    <source>
        <strain>C57BL/6J</strain>
    </source>
</reference>
<reference key="2">
    <citation type="journal article" date="1992" name="Nature">
        <title>Nested expression domains of four homeobox genes in developing rostral brain.</title>
        <authorList>
            <person name="Simeone A."/>
            <person name="Acampora D."/>
            <person name="Gulisano M."/>
            <person name="Stornaiuolo A."/>
            <person name="Boncinelli E."/>
        </authorList>
    </citation>
    <scope>NUCLEOTIDE SEQUENCE [MRNA] OF 31-98</scope>
    <source>
        <tissue>Embryo</tissue>
    </source>
</reference>
<reference key="3">
    <citation type="journal article" date="2008" name="J. Clin. Endocrinol. Metab.">
        <title>A novel dominant negative mutation of OTX2 associated with combined pituitary hormone deficiency.</title>
        <authorList>
            <person name="Diaczok D."/>
            <person name="Romero C."/>
            <person name="Zunich J."/>
            <person name="Marshall I."/>
            <person name="Radovick S."/>
        </authorList>
    </citation>
    <scope>MUTAGENESIS OF ASN-225</scope>
</reference>
<reference key="4">
    <citation type="submission" date="2006-10" db="PDB data bank">
        <title>Solution structure of the homeobox domain of homeobox protein OTX2.</title>
        <authorList>
            <consortium name="RIKEN structural genomics initiative (RSGI)"/>
        </authorList>
    </citation>
    <scope>STRUCTURE BY NMR OF 39-105</scope>
</reference>
<proteinExistence type="evidence at protein level"/>
<protein>
    <recommendedName>
        <fullName>Homeobox protein OTX2</fullName>
    </recommendedName>
    <alternativeName>
        <fullName>Orthodenticle homolog 2</fullName>
    </alternativeName>
</protein>
<sequence>MMSYLKQPPYAVNGLSLTTSGMDLLHPSVGYPATPRKQRRERTTFTRAQLDVLEALFAKTRYPDIFMREEVALKINLPESRVQVWFKNRRAKCRQQQQQQQNGGQNKVRPAKKKSSPAREVSSESGTSGQFTPPSSTSVPTIASSSAPVSIWSPASISPLSDPLSTSSSCMQRSYPMTYTQASGYSQGYAGSTSYFGGMDCGSYLTPMHHQLPGPGATLSPMGTNAVTSHLNQSPASLSTQGYGASSLGFNSTTDCLDYKDQTASWKLNFNADCLDYKDQTSSWKFQVL</sequence>
<comment type="function">
    <text evidence="1">Transcription factor probably involved in the development of the brain and the sense organs. Can bind to the bicoid/BCD target sequence (BTS): 5'-TCTAATCCC-3'.</text>
</comment>
<comment type="subcellular location">
    <subcellularLocation>
        <location evidence="1">Nucleus</location>
    </subcellularLocation>
</comment>
<comment type="tissue specificity">
    <text>Brain: restricted regions of the developing rostral brain including the presumptive cerebral cortex and olfactory bulbs; expressed in the developing olfactory, auricolar and ocular systems, including the covering of the optic nerve.</text>
</comment>
<comment type="developmental stage">
    <text>Embryo.</text>
</comment>
<comment type="similarity">
    <text evidence="5">Belongs to the paired homeobox family. Bicoid subfamily.</text>
</comment>
<keyword id="KW-0002">3D-structure</keyword>
<keyword id="KW-0217">Developmental protein</keyword>
<keyword id="KW-0238">DNA-binding</keyword>
<keyword id="KW-0371">Homeobox</keyword>
<keyword id="KW-0539">Nucleus</keyword>
<keyword id="KW-1185">Reference proteome</keyword>